<gene>
    <name evidence="1" type="primary">hel308</name>
    <name evidence="5" type="synonym">hjm</name>
    <name type="ordered locus">STK_05900</name>
</gene>
<accession>Q974S1</accession>
<accession>F9VN44</accession>
<reference key="1">
    <citation type="journal article" date="2001" name="DNA Res.">
        <title>Complete genome sequence of an aerobic thermoacidophilic Crenarchaeon, Sulfolobus tokodaii strain7.</title>
        <authorList>
            <person name="Kawarabayasi Y."/>
            <person name="Hino Y."/>
            <person name="Horikawa H."/>
            <person name="Jin-no K."/>
            <person name="Takahashi M."/>
            <person name="Sekine M."/>
            <person name="Baba S."/>
            <person name="Ankai A."/>
            <person name="Kosugi H."/>
            <person name="Hosoyama A."/>
            <person name="Fukui S."/>
            <person name="Nagai Y."/>
            <person name="Nishijima K."/>
            <person name="Otsuka R."/>
            <person name="Nakazawa H."/>
            <person name="Takamiya M."/>
            <person name="Kato Y."/>
            <person name="Yoshizawa T."/>
            <person name="Tanaka T."/>
            <person name="Kudoh Y."/>
            <person name="Yamazaki J."/>
            <person name="Kushida N."/>
            <person name="Oguchi A."/>
            <person name="Aoki K."/>
            <person name="Masuda S."/>
            <person name="Yanagii M."/>
            <person name="Nishimura M."/>
            <person name="Yamagishi A."/>
            <person name="Oshima T."/>
            <person name="Kikuchi H."/>
        </authorList>
    </citation>
    <scope>NUCLEOTIDE SEQUENCE [LARGE SCALE GENOMIC DNA]</scope>
    <source>
        <strain>DSM 16993 / JCM 10545 / NBRC 100140 / 7</strain>
    </source>
</reference>
<reference key="2">
    <citation type="journal article" date="2008" name="Biochem. Biophys. Res. Commun.">
        <title>Spatial subunit distribution and in vitro functions of the novel trimeric PCNA complex from Sulfolobus tokodaii.</title>
        <authorList>
            <person name="Lu S."/>
            <person name="Li Z."/>
            <person name="Wang Z."/>
            <person name="Ma X."/>
            <person name="Sheng D."/>
            <person name="Ni J."/>
            <person name="Shen Y."/>
        </authorList>
    </citation>
    <scope>ACTIVITY REGULATION</scope>
    <source>
        <strain>DSM 16993 / JCM 10545 / NBRC 100140 / 7</strain>
    </source>
</reference>
<reference key="3">
    <citation type="journal article" date="2008" name="J. Bacteriol.">
        <title>Hjm/Hel308A DNA helicase from Sulfolobus tokodaii promotes replication fork regression and interacts with Hjc endonuclease in vitro.</title>
        <authorList>
            <person name="Li Z."/>
            <person name="Lu S."/>
            <person name="Hou G."/>
            <person name="Ma X."/>
            <person name="Sheng D."/>
            <person name="Ni J."/>
            <person name="Shen Y."/>
        </authorList>
    </citation>
    <scope>FUNCTION AS AN ATPASE</scope>
    <scope>FUNCTION AS A HELICASE</scope>
    <scope>CATALYTIC ACTIVITY</scope>
    <scope>COFACTOR</scope>
    <scope>ACTIVITY REGULATION</scope>
    <scope>INTERACTION WITH HJC</scope>
    <scope>SUBUNIT</scope>
    <scope>DNA-BINDING</scope>
    <source>
        <strain>DSM 16993 / JCM 10545 / NBRC 100140 / 7</strain>
    </source>
</reference>
<reference key="4">
    <citation type="journal article" date="2012" name="DNA Repair">
        <title>Dissection of the functional domains of an archaeal Holliday junction helicase.</title>
        <authorList>
            <person name="Hong Y."/>
            <person name="Chu M."/>
            <person name="Li Y."/>
            <person name="Ni J."/>
            <person name="Sheng D."/>
            <person name="Hou G."/>
            <person name="She Q."/>
            <person name="Shen Y."/>
        </authorList>
    </citation>
    <scope>FUNCTION</scope>
    <scope>INTERACTION WITH HJC</scope>
    <scope>DOMAIN</scope>
    <scope>DNA-BINDING</scope>
    <source>
        <strain>DSM 16993 / JCM 10545 / NBRC 100140 / 7</strain>
    </source>
</reference>
<comment type="function">
    <text evidence="2 4">An ATP, Mg(2+)-dependent DNA 3'-5' and 5'-3' helicase that may be involved in repair of stalled replication forks. Stimulated by both ss and dsDNA. Unwinds both leading and lagging strands in replication fork structures, unlike orthologs in P.furiosus and M.thermautotrophicus which only unwind the lagging strand and only have 3'-5' helicase activity. Preferentially binds dsDNA with overhangs or branched DNA. Able to anneal DNA substrates that could form a replication fork-like structure, has replication fork reversal activity (at least in vitro).</text>
</comment>
<comment type="catalytic activity">
    <reaction evidence="1 2">
        <text>Couples ATP hydrolysis with the unwinding of duplex DNA by translocating in the 3'-5' direction.</text>
        <dbReference type="EC" id="5.6.2.4"/>
    </reaction>
</comment>
<comment type="catalytic activity">
    <reaction evidence="1 2">
        <text>ATP + H2O = ADP + phosphate + H(+)</text>
        <dbReference type="Rhea" id="RHEA:13065"/>
        <dbReference type="ChEBI" id="CHEBI:15377"/>
        <dbReference type="ChEBI" id="CHEBI:15378"/>
        <dbReference type="ChEBI" id="CHEBI:30616"/>
        <dbReference type="ChEBI" id="CHEBI:43474"/>
        <dbReference type="ChEBI" id="CHEBI:456216"/>
        <dbReference type="EC" id="5.6.2.4"/>
    </reaction>
</comment>
<comment type="catalytic activity">
    <reaction evidence="2">
        <text>Couples ATP hydrolysis with the unwinding of duplex DNA at the replication fork by translocating in the 5'-3' direction. This creates two antiparallel DNA single strands (ssDNA). The leading ssDNA polymer is the template for DNA polymerase III holoenzyme which synthesizes a continuous strand.</text>
        <dbReference type="EC" id="5.6.2.3"/>
    </reaction>
</comment>
<comment type="catalytic activity">
    <reaction evidence="2">
        <text>ATP + H2O = ADP + phosphate + H(+)</text>
        <dbReference type="Rhea" id="RHEA:13065"/>
        <dbReference type="ChEBI" id="CHEBI:15377"/>
        <dbReference type="ChEBI" id="CHEBI:15378"/>
        <dbReference type="ChEBI" id="CHEBI:30616"/>
        <dbReference type="ChEBI" id="CHEBI:43474"/>
        <dbReference type="ChEBI" id="CHEBI:456216"/>
        <dbReference type="EC" id="5.6.2.3"/>
    </reaction>
</comment>
<comment type="cofactor">
    <cofactor evidence="2">
        <name>Mg(2+)</name>
        <dbReference type="ChEBI" id="CHEBI:18420"/>
    </cofactor>
</comment>
<comment type="activity regulation">
    <text evidence="2 3">Helicase activity is inhibited by Hjc (PubMed:18296528) and by PCNA123 and PCNA323 (PubMed:18782564).</text>
</comment>
<comment type="subunit">
    <text evidence="1 2">Monomer; forms a 1:2 complex with Hjc, which may form a complex with Holliday junction DNA (PubMed:18296528).</text>
</comment>
<comment type="domain">
    <text evidence="4">DNA-binding occurs via the first 2 N-terminal domains, which are also responsible for ATPase (PubMed:22062475).</text>
</comment>
<comment type="domain">
    <text evidence="4">The central region (432-645) which is structurally composed of 2 domains (432-500 and 501-645) is necessary for helicase activity (PubMed:22062475).</text>
</comment>
<comment type="domain">
    <text evidence="4">The C-terminal region (646-704) inhibits ATPase and helicase activity (PubMed:22062475).</text>
</comment>
<comment type="similarity">
    <text evidence="1">Belongs to the helicase family. Hel308 subfamily.</text>
</comment>
<proteinExistence type="evidence at protein level"/>
<keyword id="KW-0067">ATP-binding</keyword>
<keyword id="KW-0227">DNA damage</keyword>
<keyword id="KW-0234">DNA repair</keyword>
<keyword id="KW-0238">DNA-binding</keyword>
<keyword id="KW-0347">Helicase</keyword>
<keyword id="KW-0378">Hydrolase</keyword>
<keyword id="KW-0413">Isomerase</keyword>
<keyword id="KW-0547">Nucleotide-binding</keyword>
<keyword id="KW-1185">Reference proteome</keyword>
<sequence>METISIDDLPLDIKIIDILKRRGIRTLNPPQSEAIRKGLLDGKRLLVTSPTASGKTLIAELGMINYLLSKGGKAIYITPLRALTNEKYNTFKDWETLGIKTGMTSGDYDTDDAWLENYDIIVTTYEKLDSLWRHKAKWLNEVSYFVLDEFHYLNDPERGPTVESVAIRAKKRGIVLGLSATISNGKEIANWLNAELVATNWRPVPLKEGIIYPEKKGFVVVYKDNTSRKVYGDDAIIAYTLDIVSKGGQVLVFRSSRKLAENTARKIVQYMNFVKLEDKKLLEIARKIKEVEDAGSNEKEDLYNLVLRGVAYHHAGLSKGLRDIIESSFRDRILKVIVATPTLAAGVNLPARAVVIGDIYRYNRKVVGYMDLIPVMDYKQMSGRAGRPGFDENGEAVVVVRNKREAEKVYERYLMSDVEPIESKLGSESAFYSFLISIIASEGEKTTEELMEYVKETLLPKELAKKYFRSGLDWLLQHDIFAEISDKITLTRFGRRISDLYINPFTAVTIREALEKNEKGCEIAYLHLLAYTPDGPSIGVSRAEEDALIDELNCELFVDEPEDEYEFSNYISALKVAYIVYDWVNEIDEDTILGKYGIGSGDLRAIIDTMDWLTYSGYHVASVLELKDHKDILEELHARVKDGVKPELIELVKIPGIGRVRARLLYQHDIKKPEDIVLNPEKVKQLLGPNLGEKIVREAARTIA</sequence>
<dbReference type="EC" id="5.6.2.3" evidence="2"/>
<dbReference type="EC" id="5.6.2.4" evidence="1 2"/>
<dbReference type="EMBL" id="BA000023">
    <property type="protein sequence ID" value="BAK54341.1"/>
    <property type="molecule type" value="Genomic_DNA"/>
</dbReference>
<dbReference type="RefSeq" id="WP_010978569.1">
    <property type="nucleotide sequence ID" value="NC_003106.2"/>
</dbReference>
<dbReference type="SMR" id="Q974S1"/>
<dbReference type="STRING" id="273063.STK_05900"/>
<dbReference type="GeneID" id="1458536"/>
<dbReference type="KEGG" id="sto:STK_05900"/>
<dbReference type="PATRIC" id="fig|273063.9.peg.671"/>
<dbReference type="eggNOG" id="arCOG00553">
    <property type="taxonomic scope" value="Archaea"/>
</dbReference>
<dbReference type="OrthoDB" id="371946at2157"/>
<dbReference type="BRENDA" id="3.6.4.12">
    <property type="organism ID" value="15396"/>
</dbReference>
<dbReference type="Proteomes" id="UP000001015">
    <property type="component" value="Chromosome"/>
</dbReference>
<dbReference type="GO" id="GO:0043138">
    <property type="term" value="F:3'-5' DNA helicase activity"/>
    <property type="evidence" value="ECO:0000314"/>
    <property type="project" value="UniProtKB"/>
</dbReference>
<dbReference type="GO" id="GO:0043139">
    <property type="term" value="F:5'-3' DNA helicase activity"/>
    <property type="evidence" value="ECO:0000314"/>
    <property type="project" value="UniProtKB"/>
</dbReference>
<dbReference type="GO" id="GO:0005524">
    <property type="term" value="F:ATP binding"/>
    <property type="evidence" value="ECO:0007669"/>
    <property type="project" value="UniProtKB-UniRule"/>
</dbReference>
<dbReference type="GO" id="GO:0016887">
    <property type="term" value="F:ATP hydrolysis activity"/>
    <property type="evidence" value="ECO:0007669"/>
    <property type="project" value="RHEA"/>
</dbReference>
<dbReference type="GO" id="GO:0003677">
    <property type="term" value="F:DNA binding"/>
    <property type="evidence" value="ECO:0007669"/>
    <property type="project" value="UniProtKB-UniRule"/>
</dbReference>
<dbReference type="GO" id="GO:0006281">
    <property type="term" value="P:DNA repair"/>
    <property type="evidence" value="ECO:0007669"/>
    <property type="project" value="UniProtKB-UniRule"/>
</dbReference>
<dbReference type="CDD" id="cd18028">
    <property type="entry name" value="DEXHc_archSki2"/>
    <property type="match status" value="1"/>
</dbReference>
<dbReference type="CDD" id="cd18795">
    <property type="entry name" value="SF2_C_Ski2"/>
    <property type="match status" value="1"/>
</dbReference>
<dbReference type="Gene3D" id="1.10.3380.30">
    <property type="match status" value="1"/>
</dbReference>
<dbReference type="Gene3D" id="1.10.150.20">
    <property type="entry name" value="5' to 3' exonuclease, C-terminal subdomain"/>
    <property type="match status" value="1"/>
</dbReference>
<dbReference type="Gene3D" id="3.40.50.300">
    <property type="entry name" value="P-loop containing nucleotide triphosphate hydrolases"/>
    <property type="match status" value="2"/>
</dbReference>
<dbReference type="HAMAP" id="MF_00442">
    <property type="entry name" value="Helicase_Hel308"/>
    <property type="match status" value="1"/>
</dbReference>
<dbReference type="InterPro" id="IPR011545">
    <property type="entry name" value="DEAD/DEAH_box_helicase_dom"/>
</dbReference>
<dbReference type="InterPro" id="IPR048772">
    <property type="entry name" value="Hel308-like_dom4"/>
</dbReference>
<dbReference type="InterPro" id="IPR053416">
    <property type="entry name" value="Hel308_helicase"/>
</dbReference>
<dbReference type="InterPro" id="IPR050474">
    <property type="entry name" value="Hel308_SKI2-like"/>
</dbReference>
<dbReference type="InterPro" id="IPR014001">
    <property type="entry name" value="Helicase_ATP-bd"/>
</dbReference>
<dbReference type="InterPro" id="IPR001650">
    <property type="entry name" value="Helicase_C-like"/>
</dbReference>
<dbReference type="InterPro" id="IPR022965">
    <property type="entry name" value="Helicase_Hel308"/>
</dbReference>
<dbReference type="InterPro" id="IPR046931">
    <property type="entry name" value="HTH_61"/>
</dbReference>
<dbReference type="InterPro" id="IPR027417">
    <property type="entry name" value="P-loop_NTPase"/>
</dbReference>
<dbReference type="InterPro" id="IPR036390">
    <property type="entry name" value="WH_DNA-bd_sf"/>
</dbReference>
<dbReference type="NCBIfam" id="NF040935">
    <property type="entry name" value="helicase_Hel308"/>
    <property type="match status" value="1"/>
</dbReference>
<dbReference type="PANTHER" id="PTHR47961:SF10">
    <property type="entry name" value="ATP-DEPENDENT DNA HELICASE HEL308"/>
    <property type="match status" value="1"/>
</dbReference>
<dbReference type="PANTHER" id="PTHR47961">
    <property type="entry name" value="DNA POLYMERASE THETA, PUTATIVE (AFU_ORTHOLOGUE AFUA_1G05260)-RELATED"/>
    <property type="match status" value="1"/>
</dbReference>
<dbReference type="Pfam" id="PF00270">
    <property type="entry name" value="DEAD"/>
    <property type="match status" value="1"/>
</dbReference>
<dbReference type="Pfam" id="PF00271">
    <property type="entry name" value="Helicase_C"/>
    <property type="match status" value="1"/>
</dbReference>
<dbReference type="Pfam" id="PF21280">
    <property type="entry name" value="Helicase_dom4_arc"/>
    <property type="match status" value="1"/>
</dbReference>
<dbReference type="Pfam" id="PF20470">
    <property type="entry name" value="HTH_61"/>
    <property type="match status" value="1"/>
</dbReference>
<dbReference type="SMART" id="SM00487">
    <property type="entry name" value="DEXDc"/>
    <property type="match status" value="1"/>
</dbReference>
<dbReference type="SMART" id="SM00490">
    <property type="entry name" value="HELICc"/>
    <property type="match status" value="1"/>
</dbReference>
<dbReference type="SUPFAM" id="SSF52540">
    <property type="entry name" value="P-loop containing nucleoside triphosphate hydrolases"/>
    <property type="match status" value="1"/>
</dbReference>
<dbReference type="SUPFAM" id="SSF158702">
    <property type="entry name" value="Sec63 N-terminal domain-like"/>
    <property type="match status" value="1"/>
</dbReference>
<dbReference type="SUPFAM" id="SSF46785">
    <property type="entry name" value="Winged helix' DNA-binding domain"/>
    <property type="match status" value="1"/>
</dbReference>
<dbReference type="PROSITE" id="PS51192">
    <property type="entry name" value="HELICASE_ATP_BIND_1"/>
    <property type="match status" value="1"/>
</dbReference>
<dbReference type="PROSITE" id="PS51194">
    <property type="entry name" value="HELICASE_CTER"/>
    <property type="match status" value="1"/>
</dbReference>
<name>HELS_SULTO</name>
<organism>
    <name type="scientific">Sulfurisphaera tokodaii (strain DSM 16993 / JCM 10545 / NBRC 100140 / 7)</name>
    <name type="common">Sulfolobus tokodaii</name>
    <dbReference type="NCBI Taxonomy" id="273063"/>
    <lineage>
        <taxon>Archaea</taxon>
        <taxon>Thermoproteota</taxon>
        <taxon>Thermoprotei</taxon>
        <taxon>Sulfolobales</taxon>
        <taxon>Sulfolobaceae</taxon>
        <taxon>Sulfurisphaera</taxon>
    </lineage>
</organism>
<protein>
    <recommendedName>
        <fullName evidence="1">ATP-dependent DNA helicase Hel308</fullName>
        <ecNumber evidence="2">5.6.2.3</ecNumber>
        <ecNumber evidence="1 2">5.6.2.4</ecNumber>
    </recommendedName>
    <alternativeName>
        <fullName evidence="5">ATP-dependent Holliday junction unwindase Hjm</fullName>
        <shortName evidence="5">StoHjm</shortName>
    </alternativeName>
    <alternativeName>
        <fullName evidence="1">DNA 3'-5' helicase Hel308</fullName>
    </alternativeName>
    <alternativeName>
        <fullName evidence="6">DNA 5'-3' helicase Hel308</fullName>
    </alternativeName>
</protein>
<feature type="chain" id="PRO_0000102113" description="ATP-dependent DNA helicase Hel308">
    <location>
        <begin position="1"/>
        <end position="704"/>
    </location>
</feature>
<feature type="domain" description="Helicase ATP-binding" evidence="1">
    <location>
        <begin position="36"/>
        <end position="200"/>
    </location>
</feature>
<feature type="domain" description="Helicase C-terminal" evidence="1">
    <location>
        <begin position="235"/>
        <end position="439"/>
    </location>
</feature>
<feature type="region of interest" description="Binds Hjc">
    <location>
        <begin position="366"/>
        <end position="645"/>
    </location>
</feature>
<feature type="region of interest" description="Required for helicase activity">
    <location>
        <begin position="432"/>
        <end position="644"/>
    </location>
</feature>
<feature type="region of interest" description="Inhibits intrinsic ATPase, and helicase">
    <location>
        <begin position="646"/>
        <end position="704"/>
    </location>
</feature>
<feature type="short sequence motif" description="DEAH box" evidence="1">
    <location>
        <begin position="148"/>
        <end position="151"/>
    </location>
</feature>
<feature type="binding site" evidence="1">
    <location>
        <position position="31"/>
    </location>
    <ligand>
        <name>ATP</name>
        <dbReference type="ChEBI" id="CHEBI:30616"/>
    </ligand>
</feature>
<feature type="binding site" evidence="1">
    <location>
        <begin position="49"/>
        <end position="56"/>
    </location>
    <ligand>
        <name>ATP</name>
        <dbReference type="ChEBI" id="CHEBI:30616"/>
    </ligand>
</feature>
<evidence type="ECO:0000255" key="1">
    <source>
        <dbReference type="HAMAP-Rule" id="MF_00442"/>
    </source>
</evidence>
<evidence type="ECO:0000269" key="2">
    <source>
    </source>
</evidence>
<evidence type="ECO:0000269" key="3">
    <source>
    </source>
</evidence>
<evidence type="ECO:0000269" key="4">
    <source>
    </source>
</evidence>
<evidence type="ECO:0000303" key="5">
    <source>
    </source>
</evidence>
<evidence type="ECO:0000305" key="6"/>